<dbReference type="EC" id="2.7.7.68" evidence="1"/>
<dbReference type="EMBL" id="AM114193">
    <property type="protein sequence ID" value="CAJ35892.1"/>
    <property type="molecule type" value="Genomic_DNA"/>
</dbReference>
<dbReference type="RefSeq" id="WP_012036610.1">
    <property type="nucleotide sequence ID" value="NC_009464.1"/>
</dbReference>
<dbReference type="SMR" id="Q0W6V1"/>
<dbReference type="STRING" id="351160.RCIX464"/>
<dbReference type="GeneID" id="5145593"/>
<dbReference type="KEGG" id="rci:RCIX464"/>
<dbReference type="eggNOG" id="arCOG04472">
    <property type="taxonomic scope" value="Archaea"/>
</dbReference>
<dbReference type="OrthoDB" id="11179at2157"/>
<dbReference type="UniPathway" id="UPA00071"/>
<dbReference type="Proteomes" id="UP000000663">
    <property type="component" value="Chromosome"/>
</dbReference>
<dbReference type="GO" id="GO:0005525">
    <property type="term" value="F:GTP binding"/>
    <property type="evidence" value="ECO:0007669"/>
    <property type="project" value="UniProtKB-KW"/>
</dbReference>
<dbReference type="GO" id="GO:0043814">
    <property type="term" value="F:phospholactate guanylyltransferase activity"/>
    <property type="evidence" value="ECO:0007669"/>
    <property type="project" value="UniProtKB-EC"/>
</dbReference>
<dbReference type="GO" id="GO:0052645">
    <property type="term" value="P:F420-0 metabolic process"/>
    <property type="evidence" value="ECO:0007669"/>
    <property type="project" value="UniProtKB-UniRule"/>
</dbReference>
<dbReference type="Gene3D" id="6.10.140.50">
    <property type="match status" value="1"/>
</dbReference>
<dbReference type="Gene3D" id="3.90.550.10">
    <property type="entry name" value="Spore Coat Polysaccharide Biosynthesis Protein SpsA, Chain A"/>
    <property type="match status" value="1"/>
</dbReference>
<dbReference type="HAMAP" id="MF_02114">
    <property type="entry name" value="CofC"/>
    <property type="match status" value="1"/>
</dbReference>
<dbReference type="InterPro" id="IPR002835">
    <property type="entry name" value="CofC"/>
</dbReference>
<dbReference type="InterPro" id="IPR029044">
    <property type="entry name" value="Nucleotide-diphossugar_trans"/>
</dbReference>
<dbReference type="NCBIfam" id="TIGR03552">
    <property type="entry name" value="F420_cofC"/>
    <property type="match status" value="1"/>
</dbReference>
<dbReference type="PANTHER" id="PTHR40392">
    <property type="entry name" value="2-PHOSPHO-L-LACTATE GUANYLYLTRANSFERASE"/>
    <property type="match status" value="1"/>
</dbReference>
<dbReference type="PANTHER" id="PTHR40392:SF1">
    <property type="entry name" value="2-PHOSPHO-L-LACTATE GUANYLYLTRANSFERASE"/>
    <property type="match status" value="1"/>
</dbReference>
<dbReference type="Pfam" id="PF01983">
    <property type="entry name" value="CofC"/>
    <property type="match status" value="1"/>
</dbReference>
<dbReference type="SUPFAM" id="SSF53448">
    <property type="entry name" value="Nucleotide-diphospho-sugar transferases"/>
    <property type="match status" value="1"/>
</dbReference>
<feature type="chain" id="PRO_0000398763" description="2-phospho-L-lactate guanylyltransferase">
    <location>
        <begin position="1"/>
        <end position="219"/>
    </location>
</feature>
<organism>
    <name type="scientific">Methanocella arvoryzae (strain DSM 22066 / NBRC 105507 / MRE50)</name>
    <dbReference type="NCBI Taxonomy" id="351160"/>
    <lineage>
        <taxon>Archaea</taxon>
        <taxon>Methanobacteriati</taxon>
        <taxon>Methanobacteriota</taxon>
        <taxon>Stenosarchaea group</taxon>
        <taxon>Methanomicrobia</taxon>
        <taxon>Methanocellales</taxon>
        <taxon>Methanocellaceae</taxon>
        <taxon>Methanocella</taxon>
    </lineage>
</organism>
<proteinExistence type="inferred from homology"/>
<keyword id="KW-0342">GTP-binding</keyword>
<keyword id="KW-0547">Nucleotide-binding</keyword>
<keyword id="KW-0548">Nucleotidyltransferase</keyword>
<keyword id="KW-1185">Reference proteome</keyword>
<keyword id="KW-0808">Transferase</keyword>
<evidence type="ECO:0000255" key="1">
    <source>
        <dbReference type="HAMAP-Rule" id="MF_02114"/>
    </source>
</evidence>
<gene>
    <name evidence="1" type="primary">cofC</name>
    <name type="ordered locus">UNCMA_22900</name>
    <name type="ORF">RCIX464</name>
</gene>
<comment type="function">
    <text evidence="1">Guanylyltransferase that catalyzes the activation of (2S)-2-phospholactate (2-PL) as (2S)-lactyl-2-diphospho-5'-guanosine, via the condensation of 2-PL with GTP. It is involved in the biosynthesis of coenzyme F420, a hydride carrier cofactor.</text>
</comment>
<comment type="catalytic activity">
    <reaction evidence="1">
        <text>(2S)-2-phospholactate + GTP + H(+) = (2S)-lactyl-2-diphospho-5'-guanosine + diphosphate</text>
        <dbReference type="Rhea" id="RHEA:63424"/>
        <dbReference type="ChEBI" id="CHEBI:15378"/>
        <dbReference type="ChEBI" id="CHEBI:33019"/>
        <dbReference type="ChEBI" id="CHEBI:37565"/>
        <dbReference type="ChEBI" id="CHEBI:59435"/>
        <dbReference type="ChEBI" id="CHEBI:59906"/>
        <dbReference type="EC" id="2.7.7.68"/>
    </reaction>
</comment>
<comment type="pathway">
    <text evidence="1">Cofactor biosynthesis; coenzyme F420 biosynthesis.</text>
</comment>
<comment type="subunit">
    <text evidence="1">Homodimer.</text>
</comment>
<comment type="similarity">
    <text evidence="1">Belongs to the CofC family.</text>
</comment>
<protein>
    <recommendedName>
        <fullName evidence="1">2-phospho-L-lactate guanylyltransferase</fullName>
        <shortName evidence="1">LP guanylyltransferase</shortName>
        <ecNumber evidence="1">2.7.7.68</ecNumber>
    </recommendedName>
</protein>
<name>COFC_METAR</name>
<accession>Q0W6V1</accession>
<reference key="1">
    <citation type="journal article" date="2006" name="Science">
        <title>Genome of rice cluster I archaea -- the key methane producers in the rice rhizosphere.</title>
        <authorList>
            <person name="Erkel C."/>
            <person name="Kube M."/>
            <person name="Reinhardt R."/>
            <person name="Liesack W."/>
        </authorList>
    </citation>
    <scope>NUCLEOTIDE SEQUENCE [LARGE SCALE GENOMIC DNA]</scope>
    <source>
        <strain>DSM 22066 / NBRC 105507 / MRE50</strain>
    </source>
</reference>
<sequence length="219" mass="24107">MKAIVPFKVVNVKSRLASLLTPEERSELAKLMLRDITSTLAAAGVEVELLTTQPFEWDGATVIVSEKELNPALNDYLLANDSPVMIVMADIPLITEKNVRDMLASPADIVICPGRGGGTNVQLIRRPDKYHVDYYGASFMDHMRIAQENGLTTEVFDSFNVSSDIDEAGDLIELYIHGKGDAAKYLRSITVLDDSKGRVRVVKEESNLRAVRIPGKMTG</sequence>